<reference key="1">
    <citation type="journal article" date="2006" name="PLoS Biol.">
        <title>The genome of deep-sea vent chemolithoautotroph Thiomicrospira crunogena XCL-2.</title>
        <authorList>
            <person name="Scott K.M."/>
            <person name="Sievert S.M."/>
            <person name="Abril F.N."/>
            <person name="Ball L.A."/>
            <person name="Barrett C.J."/>
            <person name="Blake R.A."/>
            <person name="Boller A.J."/>
            <person name="Chain P.S.G."/>
            <person name="Clark J.A."/>
            <person name="Davis C.R."/>
            <person name="Detter C."/>
            <person name="Do K.F."/>
            <person name="Dobrinski K.P."/>
            <person name="Faza B.I."/>
            <person name="Fitzpatrick K.A."/>
            <person name="Freyermuth S.K."/>
            <person name="Harmer T.L."/>
            <person name="Hauser L.J."/>
            <person name="Huegler M."/>
            <person name="Kerfeld C.A."/>
            <person name="Klotz M.G."/>
            <person name="Kong W.W."/>
            <person name="Land M."/>
            <person name="Lapidus A."/>
            <person name="Larimer F.W."/>
            <person name="Longo D.L."/>
            <person name="Lucas S."/>
            <person name="Malfatti S.A."/>
            <person name="Massey S.E."/>
            <person name="Martin D.D."/>
            <person name="McCuddin Z."/>
            <person name="Meyer F."/>
            <person name="Moore J.L."/>
            <person name="Ocampo L.H. Jr."/>
            <person name="Paul J.H."/>
            <person name="Paulsen I.T."/>
            <person name="Reep D.K."/>
            <person name="Ren Q."/>
            <person name="Ross R.L."/>
            <person name="Sato P.Y."/>
            <person name="Thomas P."/>
            <person name="Tinkham L.E."/>
            <person name="Zeruth G.T."/>
        </authorList>
    </citation>
    <scope>NUCLEOTIDE SEQUENCE [LARGE SCALE GENOMIC DNA]</scope>
    <source>
        <strain>DSM 25203 / XCL-2</strain>
    </source>
</reference>
<evidence type="ECO:0000255" key="1">
    <source>
        <dbReference type="HAMAP-Rule" id="MF_00651"/>
    </source>
</evidence>
<gene>
    <name type="ordered locus">Tcr_1828</name>
</gene>
<dbReference type="EC" id="3.1.-.-" evidence="1"/>
<dbReference type="EMBL" id="CP000109">
    <property type="protein sequence ID" value="ABB42420.1"/>
    <property type="molecule type" value="Genomic_DNA"/>
</dbReference>
<dbReference type="SMR" id="Q31EK3"/>
<dbReference type="STRING" id="317025.Tcr_1828"/>
<dbReference type="KEGG" id="tcx:Tcr_1828"/>
<dbReference type="eggNOG" id="COG0816">
    <property type="taxonomic scope" value="Bacteria"/>
</dbReference>
<dbReference type="HOGENOM" id="CLU_098240_3_0_6"/>
<dbReference type="OrthoDB" id="9796140at2"/>
<dbReference type="GO" id="GO:0005829">
    <property type="term" value="C:cytosol"/>
    <property type="evidence" value="ECO:0007669"/>
    <property type="project" value="TreeGrafter"/>
</dbReference>
<dbReference type="GO" id="GO:0004518">
    <property type="term" value="F:nuclease activity"/>
    <property type="evidence" value="ECO:0007669"/>
    <property type="project" value="UniProtKB-KW"/>
</dbReference>
<dbReference type="GO" id="GO:0000967">
    <property type="term" value="P:rRNA 5'-end processing"/>
    <property type="evidence" value="ECO:0007669"/>
    <property type="project" value="UniProtKB-UniRule"/>
</dbReference>
<dbReference type="CDD" id="cd16964">
    <property type="entry name" value="YqgF"/>
    <property type="match status" value="1"/>
</dbReference>
<dbReference type="Gene3D" id="3.30.420.140">
    <property type="entry name" value="YqgF/RNase H-like domain"/>
    <property type="match status" value="1"/>
</dbReference>
<dbReference type="HAMAP" id="MF_00651">
    <property type="entry name" value="Nuclease_YqgF"/>
    <property type="match status" value="1"/>
</dbReference>
<dbReference type="InterPro" id="IPR012337">
    <property type="entry name" value="RNaseH-like_sf"/>
</dbReference>
<dbReference type="InterPro" id="IPR005227">
    <property type="entry name" value="YqgF"/>
</dbReference>
<dbReference type="InterPro" id="IPR006641">
    <property type="entry name" value="YqgF/RNaseH-like_dom"/>
</dbReference>
<dbReference type="InterPro" id="IPR037027">
    <property type="entry name" value="YqgF/RNaseH-like_dom_sf"/>
</dbReference>
<dbReference type="NCBIfam" id="TIGR00250">
    <property type="entry name" value="RNAse_H_YqgF"/>
    <property type="match status" value="1"/>
</dbReference>
<dbReference type="PANTHER" id="PTHR33317">
    <property type="entry name" value="POLYNUCLEOTIDYL TRANSFERASE, RIBONUCLEASE H-LIKE SUPERFAMILY PROTEIN"/>
    <property type="match status" value="1"/>
</dbReference>
<dbReference type="PANTHER" id="PTHR33317:SF4">
    <property type="entry name" value="POLYNUCLEOTIDYL TRANSFERASE, RIBONUCLEASE H-LIKE SUPERFAMILY PROTEIN"/>
    <property type="match status" value="1"/>
</dbReference>
<dbReference type="Pfam" id="PF03652">
    <property type="entry name" value="RuvX"/>
    <property type="match status" value="1"/>
</dbReference>
<dbReference type="SMART" id="SM00732">
    <property type="entry name" value="YqgFc"/>
    <property type="match status" value="1"/>
</dbReference>
<dbReference type="SUPFAM" id="SSF53098">
    <property type="entry name" value="Ribonuclease H-like"/>
    <property type="match status" value="1"/>
</dbReference>
<comment type="function">
    <text evidence="1">Could be a nuclease involved in processing of the 5'-end of pre-16S rRNA.</text>
</comment>
<comment type="subcellular location">
    <subcellularLocation>
        <location evidence="1">Cytoplasm</location>
    </subcellularLocation>
</comment>
<comment type="similarity">
    <text evidence="1">Belongs to the YqgF nuclease family.</text>
</comment>
<accession>Q31EK3</accession>
<feature type="chain" id="PRO_0000257613" description="Putative pre-16S rRNA nuclease">
    <location>
        <begin position="1"/>
        <end position="134"/>
    </location>
</feature>
<name>YQGF_HYDCU</name>
<keyword id="KW-0963">Cytoplasm</keyword>
<keyword id="KW-0378">Hydrolase</keyword>
<keyword id="KW-0540">Nuclease</keyword>
<keyword id="KW-0690">Ribosome biogenesis</keyword>
<protein>
    <recommendedName>
        <fullName evidence="1">Putative pre-16S rRNA nuclease</fullName>
        <ecNumber evidence="1">3.1.-.-</ecNumber>
    </recommendedName>
</protein>
<sequence>MTKPIEGVVIGFDFGLKRIGVAIGQTITRTATPEAIVASKDGKPDWEHISRLFEEWKPSAIVVGLPMRLNGEEQALTQPARKFGQRLSGRYQRPVYYIEEQLSSIEAEQRKTKTDQPMDDHAAQIILENWLDAL</sequence>
<organism>
    <name type="scientific">Hydrogenovibrio crunogenus (strain DSM 25203 / XCL-2)</name>
    <name type="common">Thiomicrospira crunogena</name>
    <dbReference type="NCBI Taxonomy" id="317025"/>
    <lineage>
        <taxon>Bacteria</taxon>
        <taxon>Pseudomonadati</taxon>
        <taxon>Pseudomonadota</taxon>
        <taxon>Gammaproteobacteria</taxon>
        <taxon>Thiotrichales</taxon>
        <taxon>Piscirickettsiaceae</taxon>
        <taxon>Hydrogenovibrio</taxon>
    </lineage>
</organism>
<proteinExistence type="inferred from homology"/>